<dbReference type="EMBL" id="AY704414">
    <property type="protein sequence ID" value="AAW30130.1"/>
    <property type="molecule type" value="mRNA"/>
</dbReference>
<dbReference type="EMBL" id="BC012048">
    <property type="protein sequence ID" value="AAH12048.2"/>
    <property type="molecule type" value="mRNA"/>
</dbReference>
<dbReference type="EMBL" id="BC019066">
    <property type="protein sequence ID" value="AAH19066.1"/>
    <property type="molecule type" value="mRNA"/>
</dbReference>
<dbReference type="CCDS" id="CCDS3482.1"/>
<dbReference type="RefSeq" id="NP_689892.1">
    <property type="nucleotide sequence ID" value="NM_152679.4"/>
</dbReference>
<dbReference type="SMR" id="Q96EP9"/>
<dbReference type="BioGRID" id="128402">
    <property type="interactions" value="5"/>
</dbReference>
<dbReference type="CORUM" id="Q96EP9"/>
<dbReference type="FunCoup" id="Q96EP9">
    <property type="interactions" value="9"/>
</dbReference>
<dbReference type="IntAct" id="Q96EP9">
    <property type="interactions" value="6"/>
</dbReference>
<dbReference type="STRING" id="9606.ENSP00000273861"/>
<dbReference type="TCDB" id="2.A.28.1.7">
    <property type="family name" value="the bile acid:na(+) symporter (bass) family"/>
</dbReference>
<dbReference type="GlyCosmos" id="Q96EP9">
    <property type="glycosylation" value="5 sites, No reported glycans"/>
</dbReference>
<dbReference type="GlyGen" id="Q96EP9">
    <property type="glycosylation" value="7 sites"/>
</dbReference>
<dbReference type="iPTMnet" id="Q96EP9"/>
<dbReference type="PhosphoSitePlus" id="Q96EP9"/>
<dbReference type="BioMuta" id="SLC10A4"/>
<dbReference type="DMDM" id="74731592"/>
<dbReference type="jPOST" id="Q96EP9"/>
<dbReference type="MassIVE" id="Q96EP9"/>
<dbReference type="PaxDb" id="9606-ENSP00000273861"/>
<dbReference type="PeptideAtlas" id="Q96EP9"/>
<dbReference type="ProteomicsDB" id="76439"/>
<dbReference type="Antibodypedia" id="23816">
    <property type="antibodies" value="94 antibodies from 20 providers"/>
</dbReference>
<dbReference type="DNASU" id="201780"/>
<dbReference type="Ensembl" id="ENST00000273861.5">
    <property type="protein sequence ID" value="ENSP00000273861.4"/>
    <property type="gene ID" value="ENSG00000145248.7"/>
</dbReference>
<dbReference type="GeneID" id="201780"/>
<dbReference type="KEGG" id="hsa:201780"/>
<dbReference type="MANE-Select" id="ENST00000273861.5">
    <property type="protein sequence ID" value="ENSP00000273861.4"/>
    <property type="RefSeq nucleotide sequence ID" value="NM_152679.4"/>
    <property type="RefSeq protein sequence ID" value="NP_689892.1"/>
</dbReference>
<dbReference type="UCSC" id="uc003gyc.3">
    <property type="organism name" value="human"/>
</dbReference>
<dbReference type="AGR" id="HGNC:22980"/>
<dbReference type="CTD" id="201780"/>
<dbReference type="DisGeNET" id="201780"/>
<dbReference type="GeneCards" id="SLC10A4"/>
<dbReference type="HGNC" id="HGNC:22980">
    <property type="gene designation" value="SLC10A4"/>
</dbReference>
<dbReference type="HPA" id="ENSG00000145248">
    <property type="expression patterns" value="Tissue enhanced (brain, pituitary gland)"/>
</dbReference>
<dbReference type="MIM" id="618563">
    <property type="type" value="gene"/>
</dbReference>
<dbReference type="neXtProt" id="NX_Q96EP9"/>
<dbReference type="OpenTargets" id="ENSG00000145248"/>
<dbReference type="PharmGKB" id="PA134941471"/>
<dbReference type="VEuPathDB" id="HostDB:ENSG00000145248"/>
<dbReference type="eggNOG" id="KOG2718">
    <property type="taxonomic scope" value="Eukaryota"/>
</dbReference>
<dbReference type="GeneTree" id="ENSGT00950000182808"/>
<dbReference type="HOGENOM" id="CLU_034788_7_3_1"/>
<dbReference type="InParanoid" id="Q96EP9"/>
<dbReference type="OMA" id="NIMMETT"/>
<dbReference type="OrthoDB" id="203097at2759"/>
<dbReference type="PAN-GO" id="Q96EP9">
    <property type="GO annotations" value="2 GO annotations based on evolutionary models"/>
</dbReference>
<dbReference type="PhylomeDB" id="Q96EP9"/>
<dbReference type="TreeFam" id="TF315811"/>
<dbReference type="PathwayCommons" id="Q96EP9"/>
<dbReference type="SignaLink" id="Q96EP9"/>
<dbReference type="BioGRID-ORCS" id="201780">
    <property type="hits" value="10 hits in 1156 CRISPR screens"/>
</dbReference>
<dbReference type="GenomeRNAi" id="201780"/>
<dbReference type="Pharos" id="Q96EP9">
    <property type="development level" value="Tbio"/>
</dbReference>
<dbReference type="PRO" id="PR:Q96EP9"/>
<dbReference type="Proteomes" id="UP000005640">
    <property type="component" value="Chromosome 4"/>
</dbReference>
<dbReference type="RNAct" id="Q96EP9">
    <property type="molecule type" value="protein"/>
</dbReference>
<dbReference type="Bgee" id="ENSG00000145248">
    <property type="expression patterns" value="Expressed in substantia nigra pars reticulata and 112 other cell types or tissues"/>
</dbReference>
<dbReference type="GO" id="GO:0005886">
    <property type="term" value="C:plasma membrane"/>
    <property type="evidence" value="ECO:0007669"/>
    <property type="project" value="UniProtKB-SubCell"/>
</dbReference>
<dbReference type="GO" id="GO:0008508">
    <property type="term" value="F:bile acid:sodium symporter activity"/>
    <property type="evidence" value="ECO:0000318"/>
    <property type="project" value="GO_Central"/>
</dbReference>
<dbReference type="GO" id="GO:0015721">
    <property type="term" value="P:bile acid and bile salt transport"/>
    <property type="evidence" value="ECO:0000318"/>
    <property type="project" value="GO_Central"/>
</dbReference>
<dbReference type="FunFam" id="1.20.1530.20:FF:000013">
    <property type="entry name" value="sodium/bile acid cotransporter 4"/>
    <property type="match status" value="1"/>
</dbReference>
<dbReference type="Gene3D" id="1.20.1530.20">
    <property type="match status" value="1"/>
</dbReference>
<dbReference type="InterPro" id="IPR002657">
    <property type="entry name" value="BilAc:Na_symport/Acr3"/>
</dbReference>
<dbReference type="InterPro" id="IPR004710">
    <property type="entry name" value="Bilac:Na_transpt"/>
</dbReference>
<dbReference type="InterPro" id="IPR038770">
    <property type="entry name" value="Na+/solute_symporter_sf"/>
</dbReference>
<dbReference type="PANTHER" id="PTHR10361">
    <property type="entry name" value="SODIUM-BILE ACID COTRANSPORTER"/>
    <property type="match status" value="1"/>
</dbReference>
<dbReference type="PANTHER" id="PTHR10361:SF41">
    <property type="entry name" value="SODIUM_BILE ACID COTRANSPORTER 4"/>
    <property type="match status" value="1"/>
</dbReference>
<dbReference type="Pfam" id="PF01758">
    <property type="entry name" value="SBF"/>
    <property type="match status" value="1"/>
</dbReference>
<comment type="function">
    <text evidence="4">Transporter for bile acids.</text>
</comment>
<comment type="interaction">
    <interactant intactId="EBI-17456472">
        <id>Q96EP9</id>
    </interactant>
    <interactant intactId="EBI-12211159">
        <id>P29400-2</id>
        <label>COL4A5</label>
    </interactant>
    <organismsDiffer>false</organismsDiffer>
    <experiments>3</experiments>
</comment>
<comment type="interaction">
    <interactant intactId="EBI-17456472">
        <id>Q96EP9</id>
    </interactant>
    <interactant intactId="EBI-8639143">
        <id>Q96LL9</id>
        <label>DNAJC30</label>
    </interactant>
    <organismsDiffer>false</organismsDiffer>
    <experiments>3</experiments>
</comment>
<comment type="interaction">
    <interactant intactId="EBI-17456472">
        <id>Q96EP9</id>
    </interactant>
    <interactant intactId="EBI-12363689">
        <id>Q96G79</id>
        <label>SLC35A4</label>
    </interactant>
    <organismsDiffer>false</organismsDiffer>
    <experiments>3</experiments>
</comment>
<comment type="interaction">
    <interactant intactId="EBI-17456472">
        <id>Q96EP9</id>
    </interactant>
    <interactant intactId="EBI-10265825">
        <id>Q8N511</id>
        <label>TMEM199</label>
    </interactant>
    <organismsDiffer>false</organismsDiffer>
    <experiments>3</experiments>
</comment>
<comment type="interaction">
    <interactant intactId="EBI-17456472">
        <id>Q96EP9</id>
    </interactant>
    <interactant intactId="EBI-10173151">
        <id>A2RU14</id>
        <label>TMEM218</label>
    </interactant>
    <organismsDiffer>false</organismsDiffer>
    <experiments>3</experiments>
</comment>
<comment type="subcellular location">
    <subcellularLocation>
        <location evidence="4">Cell membrane</location>
        <topology evidence="4">Multi-pass membrane protein</topology>
    </subcellularLocation>
</comment>
<comment type="tissue specificity">
    <text evidence="3">Highly expressed in brain and small intestine, and moderately expressed in colon, heart, prostate, and testis. Very low levels were detected in kidney, liver, ovary, placenta, spleen, and thymus.</text>
</comment>
<comment type="PTM">
    <text evidence="4">Activated following N-terminal proteolytic cleavage by thrombin and/or proteases.</text>
</comment>
<comment type="similarity">
    <text evidence="5">Belongs to the bile acid:sodium symporter (BASS) (TC 2.A.28) family.</text>
</comment>
<evidence type="ECO:0000255" key="1"/>
<evidence type="ECO:0000256" key="2">
    <source>
        <dbReference type="SAM" id="MobiDB-lite"/>
    </source>
</evidence>
<evidence type="ECO:0000269" key="3">
    <source>
    </source>
</evidence>
<evidence type="ECO:0000269" key="4">
    <source>
    </source>
</evidence>
<evidence type="ECO:0000305" key="5"/>
<protein>
    <recommendedName>
        <fullName>Sodium/bile acid cotransporter 4</fullName>
    </recommendedName>
    <alternativeName>
        <fullName>Na(+)/bile acid cotransporter 4</fullName>
    </alternativeName>
    <alternativeName>
        <fullName>Solute carrier family 10 member 4</fullName>
    </alternativeName>
</protein>
<proteinExistence type="evidence at protein level"/>
<accession>Q96EP9</accession>
<accession>Q8WUZ2</accession>
<name>NTCP4_HUMAN</name>
<sequence>MDGNDNVTLLFAPLLRDNYTLAPNASSLGPGTDLALAPASSAGPGPGLSLGPGPSFGFSPGPTPTPEPTTSGLAGGAASHGPSPFPRPWAPHALPFWDTPLNHGLNVFVGAALCITMLGLGCTVDVNHFGAHVRRPVGALLAALCQFGLLPLLAFLLALAFKLDEVAAVAVLLCGCCPGGNLSNLMSLLVDGDMNLSIIMTISSTLLALVLMPLCLWIYSWAWINTPIVQLLPLGTVTLTLCSTLIPIGLGVFIRYKYSRVADYIVKVSLWSLLVTLVVLFIMTGTMLGPELLASIPAAVYVIAIFMPLAGYASGYGLATLFHLPPNCKRTVCLETGSQNVQLCTAILKLAFPPQFIGSMYMFPLLYALFQSAEAGIFVLIYKMYGSEMLHKRDPLDEDEDTDISYKKLKEEEMADTSYGTVKAENIIMMETAQTSL</sequence>
<keyword id="KW-1003">Cell membrane</keyword>
<keyword id="KW-0325">Glycoprotein</keyword>
<keyword id="KW-0406">Ion transport</keyword>
<keyword id="KW-0472">Membrane</keyword>
<keyword id="KW-1267">Proteomics identification</keyword>
<keyword id="KW-1185">Reference proteome</keyword>
<keyword id="KW-0915">Sodium</keyword>
<keyword id="KW-0739">Sodium transport</keyword>
<keyword id="KW-0769">Symport</keyword>
<keyword id="KW-0812">Transmembrane</keyword>
<keyword id="KW-1133">Transmembrane helix</keyword>
<keyword id="KW-0813">Transport</keyword>
<reference key="1">
    <citation type="submission" date="2004-08" db="EMBL/GenBank/DDBJ databases">
        <title>Identification of a novel bile acid transporter in human, SLC10A4.</title>
        <authorList>
            <person name="Mikkaichi T."/>
            <person name="Natori M."/>
            <person name="Abe T."/>
            <person name="Hishinuma T."/>
            <person name="Goto J."/>
        </authorList>
    </citation>
    <scope>NUCLEOTIDE SEQUENCE [MRNA]</scope>
</reference>
<reference key="2">
    <citation type="journal article" date="2004" name="Genome Res.">
        <title>The status, quality, and expansion of the NIH full-length cDNA project: the Mammalian Gene Collection (MGC).</title>
        <authorList>
            <consortium name="The MGC Project Team"/>
        </authorList>
    </citation>
    <scope>NUCLEOTIDE SEQUENCE [LARGE SCALE MRNA]</scope>
    <source>
        <tissue>Brain</tissue>
    </source>
</reference>
<reference key="3">
    <citation type="journal article" date="2008" name="Neuroscience">
        <title>Cloning and molecular characterization of the orphan carrier protein Slc10a4: expression in cholinergic neurons of the rat central nervous system.</title>
        <authorList>
            <person name="Geyer J."/>
            <person name="Fernandes C.F."/>
            <person name="Doring B."/>
            <person name="Burger S."/>
            <person name="Godoy J.R."/>
            <person name="Rafalzik S."/>
            <person name="Hubschle T."/>
            <person name="Gerstberger R."/>
            <person name="Petzinger E."/>
        </authorList>
    </citation>
    <scope>TISSUE SPECIFICITY</scope>
</reference>
<reference key="4">
    <citation type="journal article" date="2013" name="J. Biochem.">
        <title>SLC10A4 is a protease-activated transporter that transports bile acids.</title>
        <authorList>
            <person name="Abe T."/>
            <person name="Kanemitu Y."/>
            <person name="Nakasone M."/>
            <person name="Kawahata I."/>
            <person name="Yamakuni T."/>
            <person name="Nakajima A."/>
            <person name="Suzuki N."/>
            <person name="Nishikawa M."/>
            <person name="Hishinuma T."/>
            <person name="Tomioka Y."/>
        </authorList>
    </citation>
    <scope>FUNCTION</scope>
    <scope>PROTEOLYTIC CLEAVAGE</scope>
    <scope>SUBCELLULAR LOCATION</scope>
</reference>
<gene>
    <name type="primary">SLC10A4</name>
</gene>
<organism>
    <name type="scientific">Homo sapiens</name>
    <name type="common">Human</name>
    <dbReference type="NCBI Taxonomy" id="9606"/>
    <lineage>
        <taxon>Eukaryota</taxon>
        <taxon>Metazoa</taxon>
        <taxon>Chordata</taxon>
        <taxon>Craniata</taxon>
        <taxon>Vertebrata</taxon>
        <taxon>Euteleostomi</taxon>
        <taxon>Mammalia</taxon>
        <taxon>Eutheria</taxon>
        <taxon>Euarchontoglires</taxon>
        <taxon>Primates</taxon>
        <taxon>Haplorrhini</taxon>
        <taxon>Catarrhini</taxon>
        <taxon>Hominidae</taxon>
        <taxon>Homo</taxon>
    </lineage>
</organism>
<feature type="chain" id="PRO_0000263742" description="Sodium/bile acid cotransporter 4">
    <location>
        <begin position="1"/>
        <end position="437"/>
    </location>
</feature>
<feature type="topological domain" description="Extracellular" evidence="1">
    <location>
        <begin position="1"/>
        <end position="103"/>
    </location>
</feature>
<feature type="transmembrane region" description="Helical" evidence="1">
    <location>
        <begin position="104"/>
        <end position="124"/>
    </location>
</feature>
<feature type="topological domain" description="Cytoplasmic" evidence="1">
    <location>
        <begin position="125"/>
        <end position="140"/>
    </location>
</feature>
<feature type="transmembrane region" description="Helical" evidence="1">
    <location>
        <begin position="141"/>
        <end position="161"/>
    </location>
</feature>
<feature type="topological domain" description="Extracellular" evidence="1">
    <location>
        <begin position="162"/>
        <end position="197"/>
    </location>
</feature>
<feature type="transmembrane region" description="Helical" evidence="1">
    <location>
        <begin position="198"/>
        <end position="218"/>
    </location>
</feature>
<feature type="topological domain" description="Cytoplasmic" evidence="1">
    <location>
        <begin position="219"/>
        <end position="233"/>
    </location>
</feature>
<feature type="transmembrane region" description="Helical" evidence="1">
    <location>
        <begin position="234"/>
        <end position="254"/>
    </location>
</feature>
<feature type="topological domain" description="Extracellular" evidence="1">
    <location>
        <begin position="255"/>
        <end position="267"/>
    </location>
</feature>
<feature type="transmembrane region" description="Helical" evidence="1">
    <location>
        <begin position="268"/>
        <end position="288"/>
    </location>
</feature>
<feature type="topological domain" description="Cytoplasmic" evidence="1">
    <location>
        <begin position="289"/>
        <end position="291"/>
    </location>
</feature>
<feature type="transmembrane region" description="Helical" evidence="1">
    <location>
        <begin position="292"/>
        <end position="312"/>
    </location>
</feature>
<feature type="topological domain" description="Extracellular" evidence="1">
    <location>
        <begin position="313"/>
        <end position="360"/>
    </location>
</feature>
<feature type="transmembrane region" description="Helical" evidence="1">
    <location>
        <begin position="361"/>
        <end position="381"/>
    </location>
</feature>
<feature type="topological domain" description="Cytoplasmic" evidence="1">
    <location>
        <begin position="382"/>
        <end position="437"/>
    </location>
</feature>
<feature type="region of interest" description="Disordered" evidence="2">
    <location>
        <begin position="37"/>
        <end position="82"/>
    </location>
</feature>
<feature type="compositionally biased region" description="Low complexity" evidence="2">
    <location>
        <begin position="51"/>
        <end position="60"/>
    </location>
</feature>
<feature type="site" description="Cleavage; by thrombin">
    <location>
        <begin position="87"/>
        <end position="88"/>
    </location>
</feature>
<feature type="glycosylation site" description="N-linked (GlcNAc...) asparagine" evidence="1">
    <location>
        <position position="6"/>
    </location>
</feature>
<feature type="glycosylation site" description="N-linked (GlcNAc...) asparagine" evidence="1">
    <location>
        <position position="18"/>
    </location>
</feature>
<feature type="glycosylation site" description="N-linked (GlcNAc...) asparagine" evidence="1">
    <location>
        <position position="24"/>
    </location>
</feature>
<feature type="glycosylation site" description="N-linked (GlcNAc...) asparagine" evidence="1">
    <location>
        <position position="181"/>
    </location>
</feature>
<feature type="glycosylation site" description="N-linked (GlcNAc...) asparagine" evidence="1">
    <location>
        <position position="195"/>
    </location>
</feature>